<organism>
    <name type="scientific">Mus musculus</name>
    <name type="common">Mouse</name>
    <dbReference type="NCBI Taxonomy" id="10090"/>
    <lineage>
        <taxon>Eukaryota</taxon>
        <taxon>Metazoa</taxon>
        <taxon>Chordata</taxon>
        <taxon>Craniata</taxon>
        <taxon>Vertebrata</taxon>
        <taxon>Euteleostomi</taxon>
        <taxon>Mammalia</taxon>
        <taxon>Eutheria</taxon>
        <taxon>Euarchontoglires</taxon>
        <taxon>Glires</taxon>
        <taxon>Rodentia</taxon>
        <taxon>Myomorpha</taxon>
        <taxon>Muroidea</taxon>
        <taxon>Muridae</taxon>
        <taxon>Murinae</taxon>
        <taxon>Mus</taxon>
        <taxon>Mus</taxon>
    </lineage>
</organism>
<protein>
    <recommendedName>
        <fullName evidence="4">Small integral membrane protein 36</fullName>
    </recommendedName>
</protein>
<dbReference type="EMBL" id="AL626785">
    <property type="status" value="NOT_ANNOTATED_CDS"/>
    <property type="molecule type" value="Genomic_DNA"/>
</dbReference>
<dbReference type="EMBL" id="AL645990">
    <property type="status" value="NOT_ANNOTATED_CDS"/>
    <property type="molecule type" value="Genomic_DNA"/>
</dbReference>
<dbReference type="EMBL" id="BC027020">
    <property type="status" value="NOT_ANNOTATED_CDS"/>
    <property type="molecule type" value="mRNA"/>
</dbReference>
<dbReference type="RefSeq" id="NP_001382351.1">
    <property type="nucleotide sequence ID" value="NM_001395422.1"/>
</dbReference>
<dbReference type="SMR" id="A0A1B0GRQ0"/>
<dbReference type="STRING" id="10090.ENSMUSP00000147615"/>
<dbReference type="ProteomicsDB" id="261364"/>
<dbReference type="Ensembl" id="ENSMUST00000124877.3">
    <property type="protein sequence ID" value="ENSMUSP00000147478.2"/>
    <property type="gene ID" value="ENSMUSG00000110344.2"/>
</dbReference>
<dbReference type="Ensembl" id="ENSMUST00000134929.8">
    <property type="protein sequence ID" value="ENSMUSP00000147615.2"/>
    <property type="gene ID" value="ENSMUSG00000110344.2"/>
</dbReference>
<dbReference type="Ensembl" id="ENSMUST00000153734.2">
    <property type="protein sequence ID" value="ENSMUSP00000148024.2"/>
    <property type="gene ID" value="ENSMUSG00000110344.2"/>
</dbReference>
<dbReference type="GeneID" id="121811722"/>
<dbReference type="AGR" id="MGI:5804831"/>
<dbReference type="MGI" id="MGI:5804831">
    <property type="gene designation" value="Smim36"/>
</dbReference>
<dbReference type="VEuPathDB" id="HostDB:ENSMUSG00000110344"/>
<dbReference type="InParanoid" id="A0A1B0GRQ0"/>
<dbReference type="OMA" id="HLVVMQQ"/>
<dbReference type="ChiTaRS" id="Gm45716">
    <property type="organism name" value="mouse"/>
</dbReference>
<dbReference type="PRO" id="PR:A0A1B0GRQ0"/>
<dbReference type="Proteomes" id="UP000000589">
    <property type="component" value="Chromosome 11"/>
</dbReference>
<dbReference type="RNAct" id="A0A1B0GRQ0">
    <property type="molecule type" value="protein"/>
</dbReference>
<dbReference type="Bgee" id="ENSMUSG00000110344">
    <property type="expression patterns" value="Expressed in epididymal fat pad and 201 other cell types or tissues"/>
</dbReference>
<dbReference type="GO" id="GO:0016020">
    <property type="term" value="C:membrane"/>
    <property type="evidence" value="ECO:0007669"/>
    <property type="project" value="UniProtKB-SubCell"/>
</dbReference>
<name>SIM36_MOUSE</name>
<gene>
    <name evidence="4" type="primary">Smim36</name>
    <name evidence="4" type="synonym">Gm45716</name>
</gene>
<keyword id="KW-0472">Membrane</keyword>
<keyword id="KW-1185">Reference proteome</keyword>
<keyword id="KW-0812">Transmembrane</keyword>
<keyword id="KW-1133">Transmembrane helix</keyword>
<feature type="chain" id="PRO_0000443404" description="Small integral membrane protein 36">
    <location>
        <begin position="1"/>
        <end position="93"/>
    </location>
</feature>
<feature type="transmembrane region" description="Helical" evidence="1">
    <location>
        <begin position="14"/>
        <end position="34"/>
    </location>
</feature>
<feature type="region of interest" description="Disordered" evidence="2">
    <location>
        <begin position="70"/>
        <end position="93"/>
    </location>
</feature>
<feature type="sequence conflict" description="In Ref. 2; BC027020." evidence="3" ref="2">
    <original>I</original>
    <variation>T</variation>
    <location>
        <position position="58"/>
    </location>
</feature>
<reference key="1">
    <citation type="journal article" date="2009" name="PLoS Biol.">
        <title>Lineage-specific biology revealed by a finished genome assembly of the mouse.</title>
        <authorList>
            <person name="Church D.M."/>
            <person name="Goodstadt L."/>
            <person name="Hillier L.W."/>
            <person name="Zody M.C."/>
            <person name="Goldstein S."/>
            <person name="She X."/>
            <person name="Bult C.J."/>
            <person name="Agarwala R."/>
            <person name="Cherry J.L."/>
            <person name="DiCuccio M."/>
            <person name="Hlavina W."/>
            <person name="Kapustin Y."/>
            <person name="Meric P."/>
            <person name="Maglott D."/>
            <person name="Birtle Z."/>
            <person name="Marques A.C."/>
            <person name="Graves T."/>
            <person name="Zhou S."/>
            <person name="Teague B."/>
            <person name="Potamousis K."/>
            <person name="Churas C."/>
            <person name="Place M."/>
            <person name="Herschleb J."/>
            <person name="Runnheim R."/>
            <person name="Forrest D."/>
            <person name="Amos-Landgraf J."/>
            <person name="Schwartz D.C."/>
            <person name="Cheng Z."/>
            <person name="Lindblad-Toh K."/>
            <person name="Eichler E.E."/>
            <person name="Ponting C.P."/>
        </authorList>
    </citation>
    <scope>NUCLEOTIDE SEQUENCE [LARGE SCALE GENOMIC DNA]</scope>
    <source>
        <strain>C57BL/6J</strain>
    </source>
</reference>
<reference key="2">
    <citation type="journal article" date="2004" name="Genome Res.">
        <title>The status, quality, and expansion of the NIH full-length cDNA project: the Mammalian Gene Collection (MGC).</title>
        <authorList>
            <consortium name="The MGC Project Team"/>
        </authorList>
    </citation>
    <scope>NUCLEOTIDE SEQUENCE [LARGE SCALE MRNA]</scope>
</reference>
<sequence length="93" mass="10272">MEFYLEIDPVTLNLIILVASYVILLLVFLVSCVLYDCRGKDPSKEYAPESTLNAQPSIRVVVTQHSAHASHWARGPSLHLKDPAPLGKKSTVV</sequence>
<accession>A0A1B0GRQ0</accession>
<comment type="subcellular location">
    <subcellularLocation>
        <location evidence="1">Membrane</location>
        <topology evidence="1">Single-pass membrane protein</topology>
    </subcellularLocation>
</comment>
<evidence type="ECO:0000255" key="1"/>
<evidence type="ECO:0000256" key="2">
    <source>
        <dbReference type="SAM" id="MobiDB-lite"/>
    </source>
</evidence>
<evidence type="ECO:0000305" key="3"/>
<evidence type="ECO:0000312" key="4">
    <source>
        <dbReference type="MGI" id="MGI:5804831"/>
    </source>
</evidence>
<proteinExistence type="inferred from homology"/>